<keyword id="KW-0997">Cell inner membrane</keyword>
<keyword id="KW-1003">Cell membrane</keyword>
<keyword id="KW-0143">Chaperone</keyword>
<keyword id="KW-0472">Membrane</keyword>
<keyword id="KW-1185">Reference proteome</keyword>
<keyword id="KW-0812">Transmembrane</keyword>
<keyword id="KW-1133">Transmembrane helix</keyword>
<dbReference type="EMBL" id="CR378664">
    <property type="protein sequence ID" value="CAG18838.1"/>
    <property type="molecule type" value="Genomic_DNA"/>
</dbReference>
<dbReference type="SMR" id="Q6LV37"/>
<dbReference type="STRING" id="298386.PBPRA0406"/>
<dbReference type="KEGG" id="ppr:PBPRA0406"/>
<dbReference type="eggNOG" id="COG1076">
    <property type="taxonomic scope" value="Bacteria"/>
</dbReference>
<dbReference type="HOGENOM" id="CLU_066221_1_0_6"/>
<dbReference type="Proteomes" id="UP000000593">
    <property type="component" value="Chromosome 1"/>
</dbReference>
<dbReference type="GO" id="GO:0005886">
    <property type="term" value="C:plasma membrane"/>
    <property type="evidence" value="ECO:0007669"/>
    <property type="project" value="UniProtKB-SubCell"/>
</dbReference>
<dbReference type="GO" id="GO:0051087">
    <property type="term" value="F:protein-folding chaperone binding"/>
    <property type="evidence" value="ECO:0007669"/>
    <property type="project" value="InterPro"/>
</dbReference>
<dbReference type="CDD" id="cd06257">
    <property type="entry name" value="DnaJ"/>
    <property type="match status" value="1"/>
</dbReference>
<dbReference type="CDD" id="cd07316">
    <property type="entry name" value="terB_like_DjlA"/>
    <property type="match status" value="1"/>
</dbReference>
<dbReference type="FunFam" id="1.10.287.110:FF:000011">
    <property type="entry name" value="Co-chaperone protein DjlA"/>
    <property type="match status" value="1"/>
</dbReference>
<dbReference type="Gene3D" id="1.10.287.110">
    <property type="entry name" value="DnaJ domain"/>
    <property type="match status" value="1"/>
</dbReference>
<dbReference type="Gene3D" id="1.10.3680.10">
    <property type="entry name" value="TerB-like"/>
    <property type="match status" value="1"/>
</dbReference>
<dbReference type="HAMAP" id="MF_01153">
    <property type="entry name" value="DjlA"/>
    <property type="match status" value="1"/>
</dbReference>
<dbReference type="InterPro" id="IPR023749">
    <property type="entry name" value="DjlA"/>
</dbReference>
<dbReference type="InterPro" id="IPR050817">
    <property type="entry name" value="DjlA_DnaK_co-chaperone"/>
</dbReference>
<dbReference type="InterPro" id="IPR007791">
    <property type="entry name" value="DjlA_N"/>
</dbReference>
<dbReference type="InterPro" id="IPR001623">
    <property type="entry name" value="DnaJ_domain"/>
</dbReference>
<dbReference type="InterPro" id="IPR036869">
    <property type="entry name" value="J_dom_sf"/>
</dbReference>
<dbReference type="InterPro" id="IPR029024">
    <property type="entry name" value="TerB-like"/>
</dbReference>
<dbReference type="NCBIfam" id="NF006948">
    <property type="entry name" value="PRK09430.1"/>
    <property type="match status" value="1"/>
</dbReference>
<dbReference type="PANTHER" id="PTHR24074">
    <property type="entry name" value="CO-CHAPERONE PROTEIN DJLA"/>
    <property type="match status" value="1"/>
</dbReference>
<dbReference type="Pfam" id="PF00226">
    <property type="entry name" value="DnaJ"/>
    <property type="match status" value="1"/>
</dbReference>
<dbReference type="Pfam" id="PF05099">
    <property type="entry name" value="TerB"/>
    <property type="match status" value="1"/>
</dbReference>
<dbReference type="PRINTS" id="PR00625">
    <property type="entry name" value="JDOMAIN"/>
</dbReference>
<dbReference type="SMART" id="SM00271">
    <property type="entry name" value="DnaJ"/>
    <property type="match status" value="1"/>
</dbReference>
<dbReference type="SUPFAM" id="SSF46565">
    <property type="entry name" value="Chaperone J-domain"/>
    <property type="match status" value="1"/>
</dbReference>
<dbReference type="SUPFAM" id="SSF158682">
    <property type="entry name" value="TerB-like"/>
    <property type="match status" value="1"/>
</dbReference>
<dbReference type="PROSITE" id="PS50076">
    <property type="entry name" value="DNAJ_2"/>
    <property type="match status" value="1"/>
</dbReference>
<accession>Q6LV37</accession>
<organism>
    <name type="scientific">Photobacterium profundum (strain SS9)</name>
    <dbReference type="NCBI Taxonomy" id="298386"/>
    <lineage>
        <taxon>Bacteria</taxon>
        <taxon>Pseudomonadati</taxon>
        <taxon>Pseudomonadota</taxon>
        <taxon>Gammaproteobacteria</taxon>
        <taxon>Vibrionales</taxon>
        <taxon>Vibrionaceae</taxon>
        <taxon>Photobacterium</taxon>
    </lineage>
</organism>
<reference key="1">
    <citation type="journal article" date="2005" name="Science">
        <title>Life at depth: Photobacterium profundum genome sequence and expression analysis.</title>
        <authorList>
            <person name="Vezzi A."/>
            <person name="Campanaro S."/>
            <person name="D'Angelo M."/>
            <person name="Simonato F."/>
            <person name="Vitulo N."/>
            <person name="Lauro F.M."/>
            <person name="Cestaro A."/>
            <person name="Malacrida G."/>
            <person name="Simionati B."/>
            <person name="Cannata N."/>
            <person name="Romualdi C."/>
            <person name="Bartlett D.H."/>
            <person name="Valle G."/>
        </authorList>
    </citation>
    <scope>NUCLEOTIDE SEQUENCE [LARGE SCALE GENOMIC DNA]</scope>
    <source>
        <strain>ATCC BAA-1253 / SS9</strain>
    </source>
</reference>
<protein>
    <recommendedName>
        <fullName evidence="1">Co-chaperone protein DjlA</fullName>
    </recommendedName>
</protein>
<proteinExistence type="inferred from homology"/>
<comment type="function">
    <text evidence="1">Regulatory DnaK co-chaperone. Direct interaction between DnaK and DjlA is needed for the induction of the wcaABCDE operon, involved in the synthesis of a colanic acid polysaccharide capsule, possibly through activation of the RcsB/RcsC phosphotransfer signaling pathway. The colanic acid capsule may help the bacterium survive conditions outside the host.</text>
</comment>
<comment type="subunit">
    <text evidence="1">Homodimer.</text>
</comment>
<comment type="subcellular location">
    <subcellularLocation>
        <location evidence="1">Cell inner membrane</location>
        <topology evidence="1">Single-pass type III membrane protein</topology>
    </subcellularLocation>
</comment>
<comment type="domain">
    <text evidence="1">The transmembrane domain is a dimerization domain.</text>
</comment>
<name>DJLA_PHOPR</name>
<evidence type="ECO:0000255" key="1">
    <source>
        <dbReference type="HAMAP-Rule" id="MF_01153"/>
    </source>
</evidence>
<sequence length="277" mass="31123">MWGKILGAFFGFLLGGPFGLLLGLFLGHKFDKARRNVYRGGGFGGFGTNRANSEERQAEFFYAGFAVMGHMAKAKGHVTEEEIRVASAIMDRMNLHGEARRQAQNAFREGKEDGFPLEETLAKVRQNCAGRADLLQFFLELQIQAAFADGSLHQNERQLLHVIARSLGFSERQLEQRLHMQEAAFRFQQGGFNQQHGGGFNQAPTRDQLADAYEVLGVTESATSQEVKRAYRKQMNEHHPDKLAAKGLPPEMMEIANQKAQELQAAYDMIRKEKGFK</sequence>
<gene>
    <name evidence="1" type="primary">djlA</name>
    <name type="ordered locus">PBPRA0406</name>
</gene>
<feature type="chain" id="PRO_0000209434" description="Co-chaperone protein DjlA">
    <location>
        <begin position="1"/>
        <end position="277"/>
    </location>
</feature>
<feature type="topological domain" description="Periplasmic" evidence="1">
    <location>
        <begin position="1"/>
        <end position="4"/>
    </location>
</feature>
<feature type="transmembrane region" description="Helical" evidence="1">
    <location>
        <begin position="5"/>
        <end position="28"/>
    </location>
</feature>
<feature type="topological domain" description="Cytoplasmic" evidence="1">
    <location>
        <begin position="29"/>
        <end position="277"/>
    </location>
</feature>
<feature type="domain" description="J" evidence="1">
    <location>
        <begin position="211"/>
        <end position="277"/>
    </location>
</feature>